<name>EMIL1_HUMAN</name>
<evidence type="ECO:0000250" key="1">
    <source>
        <dbReference type="UniProtKB" id="Q99K41"/>
    </source>
</evidence>
<evidence type="ECO:0000255" key="2"/>
<evidence type="ECO:0000255" key="3">
    <source>
        <dbReference type="PROSITE-ProRule" id="PRU00368"/>
    </source>
</evidence>
<evidence type="ECO:0000255" key="4">
    <source>
        <dbReference type="PROSITE-ProRule" id="PRU00384"/>
    </source>
</evidence>
<evidence type="ECO:0000256" key="5">
    <source>
        <dbReference type="SAM" id="MobiDB-lite"/>
    </source>
</evidence>
<evidence type="ECO:0000269" key="6">
    <source>
    </source>
</evidence>
<evidence type="ECO:0000269" key="7">
    <source>
    </source>
</evidence>
<evidence type="ECO:0000269" key="8">
    <source>
    </source>
</evidence>
<evidence type="ECO:0000269" key="9">
    <source>
    </source>
</evidence>
<evidence type="ECO:0000269" key="10">
    <source>
    </source>
</evidence>
<evidence type="ECO:0000269" key="11">
    <source>
    </source>
</evidence>
<evidence type="ECO:0000269" key="12">
    <source>
    </source>
</evidence>
<evidence type="ECO:0000269" key="13">
    <source>
    </source>
</evidence>
<evidence type="ECO:0000303" key="14">
    <source>
    </source>
</evidence>
<evidence type="ECO:0000305" key="15"/>
<evidence type="ECO:0007829" key="16">
    <source>
        <dbReference type="PDB" id="2KA3"/>
    </source>
</evidence>
<evidence type="ECO:0007829" key="17">
    <source>
        <dbReference type="PDB" id="2OII"/>
    </source>
</evidence>
<gene>
    <name type="primary">EMILIN1</name>
    <name type="synonym">EMI</name>
</gene>
<sequence length="1016" mass="106695">MAPRTLWSCYLCCLLTAAAGAASYPPRGFSLYTGSSGALSPGGPQAQIAPRPASRHRNWCAYVVTRTVSCVLEDGVETYVKYQPCAWGQPQCPQSIMYRRFLRPRYRVAYKTVTDMEWRCCQGYGGDDCAESPAPALGPASSTPRPLARPARPNLSGSSAGSPLSGLGGEGPGESEKVQQLEEQVQSLTKELQGLRGVLQGLSGRLAEDVQRAVETAFNGRQQPADAAARPGVHETLNEIQHQLQLLDTRVSTHDQELGHLNNHHGGSSSSGGSRAPAPASAPPGPSEELLRQLEQRLQESCSVCLAGLDGFRRQQQEDRERLRAMEKLLASVEERQRHLAGLAVGRRPPQECCSPELGRRLAELERRLDVVAGSVTVLSGRRGTELGGAAGQGGHPPGYTSLASRLSRLEDRFNSTLGPSEEQEESWPGAPGGLSHWLPAARGRLEQLGGLLANVSGELGGRLDLLEEQVAGAMQACGQLCSGAPGEQDSQVSEILSALERRVLDSEGQLRLVGSGLHTVEAAGEARQATLEGLQEVVGRLQDRVDAQDETAAEFTLRLNLTAARLGQLEGLLQAHGDEGCGACGGVQEELGRLRDGVERCSCPLLPPRGPGAGPGVGGPSRGPLDGFSVFGGSSGSALQALQGELSEVILSFSSLNDSLNELQTTVEGQGADLADLGATKDRIISEINRLQQEATEHATESEERFRGLEEGQAQAGQCPSLEGRLGRLEGVCERLDTVAGGLQGLREGLSRHVAGLWAGLRETNTTSQMQAALLEKLVGGQAGLGRRLGALNSSLQLLEDRLHQLSLKDLTGPAGEAGPPGPPGLQGPPGPAGPPGSPGKDGQEGPIGPPGPQGEQGVEGAPAAPVPQVAFSAALSLPRSEPGTVPFDRVLLNDGGYYDPETGVFTAPLAGRYLLSAVLTGHRHEKVEAVLSRSNQGVARVDSGGYEPEGLENKPVAESQPSPGTLGVFSLILPLQAGDTVCVDLVMGQLAHSEEPLTIFSGALLYGDPELEHA</sequence>
<proteinExistence type="evidence at protein level"/>
<keyword id="KW-0002">3D-structure</keyword>
<keyword id="KW-0025">Alternative splicing</keyword>
<keyword id="KW-0130">Cell adhesion</keyword>
<keyword id="KW-0175">Coiled coil</keyword>
<keyword id="KW-0176">Collagen</keyword>
<keyword id="KW-0225">Disease variant</keyword>
<keyword id="KW-1015">Disulfide bond</keyword>
<keyword id="KW-0272">Extracellular matrix</keyword>
<keyword id="KW-0325">Glycoprotein</keyword>
<keyword id="KW-0523">Neurodegeneration</keyword>
<keyword id="KW-0622">Neuropathy</keyword>
<keyword id="KW-1267">Proteomics identification</keyword>
<keyword id="KW-1185">Reference proteome</keyword>
<keyword id="KW-0964">Secreted</keyword>
<keyword id="KW-0732">Signal</keyword>
<reference key="1">
    <citation type="journal article" date="1999" name="J. Biol. Chem.">
        <title>EMILIN, a component of the elastic fiber and a new member of the C1q/tumor necrosis factor superfamily of proteins.</title>
        <authorList>
            <person name="Doliana R."/>
            <person name="Mongiat M."/>
            <person name="Bucciotti F."/>
            <person name="Giacomello E."/>
            <person name="Deutzmann R."/>
            <person name="Volpin D."/>
            <person name="Bressan G.M."/>
            <person name="Colombatti A."/>
        </authorList>
    </citation>
    <scope>NUCLEOTIDE SEQUENCE [MRNA] (ISOFORM 1)</scope>
</reference>
<reference key="2">
    <citation type="journal article" date="2000" name="J. Biol. Chem.">
        <title>Structure, chromosomal localization, and promoter analysis of the human elastin microfibril interface located protein (EMILIN) gene.</title>
        <authorList>
            <person name="Doliana R."/>
            <person name="Canton A."/>
            <person name="Bucciotti F."/>
            <person name="Mongiat M."/>
            <person name="Bonaldo P."/>
            <person name="Colombatti A."/>
        </authorList>
    </citation>
    <scope>NUCLEOTIDE SEQUENCE [GENOMIC DNA]</scope>
    <scope>SUBCELLULAR LOCATION</scope>
</reference>
<reference key="3">
    <citation type="journal article" date="2005" name="Nature">
        <title>Generation and annotation of the DNA sequences of human chromosomes 2 and 4.</title>
        <authorList>
            <person name="Hillier L.W."/>
            <person name="Graves T.A."/>
            <person name="Fulton R.S."/>
            <person name="Fulton L.A."/>
            <person name="Pepin K.H."/>
            <person name="Minx P."/>
            <person name="Wagner-McPherson C."/>
            <person name="Layman D."/>
            <person name="Wylie K."/>
            <person name="Sekhon M."/>
            <person name="Becker M.C."/>
            <person name="Fewell G.A."/>
            <person name="Delehaunty K.D."/>
            <person name="Miner T.L."/>
            <person name="Nash W.E."/>
            <person name="Kremitzki C."/>
            <person name="Oddy L."/>
            <person name="Du H."/>
            <person name="Sun H."/>
            <person name="Bradshaw-Cordum H."/>
            <person name="Ali J."/>
            <person name="Carter J."/>
            <person name="Cordes M."/>
            <person name="Harris A."/>
            <person name="Isak A."/>
            <person name="van Brunt A."/>
            <person name="Nguyen C."/>
            <person name="Du F."/>
            <person name="Courtney L."/>
            <person name="Kalicki J."/>
            <person name="Ozersky P."/>
            <person name="Abbott S."/>
            <person name="Armstrong J."/>
            <person name="Belter E.A."/>
            <person name="Caruso L."/>
            <person name="Cedroni M."/>
            <person name="Cotton M."/>
            <person name="Davidson T."/>
            <person name="Desai A."/>
            <person name="Elliott G."/>
            <person name="Erb T."/>
            <person name="Fronick C."/>
            <person name="Gaige T."/>
            <person name="Haakenson W."/>
            <person name="Haglund K."/>
            <person name="Holmes A."/>
            <person name="Harkins R."/>
            <person name="Kim K."/>
            <person name="Kruchowski S.S."/>
            <person name="Strong C.M."/>
            <person name="Grewal N."/>
            <person name="Goyea E."/>
            <person name="Hou S."/>
            <person name="Levy A."/>
            <person name="Martinka S."/>
            <person name="Mead K."/>
            <person name="McLellan M.D."/>
            <person name="Meyer R."/>
            <person name="Randall-Maher J."/>
            <person name="Tomlinson C."/>
            <person name="Dauphin-Kohlberg S."/>
            <person name="Kozlowicz-Reilly A."/>
            <person name="Shah N."/>
            <person name="Swearengen-Shahid S."/>
            <person name="Snider J."/>
            <person name="Strong J.T."/>
            <person name="Thompson J."/>
            <person name="Yoakum M."/>
            <person name="Leonard S."/>
            <person name="Pearman C."/>
            <person name="Trani L."/>
            <person name="Radionenko M."/>
            <person name="Waligorski J.E."/>
            <person name="Wang C."/>
            <person name="Rock S.M."/>
            <person name="Tin-Wollam A.-M."/>
            <person name="Maupin R."/>
            <person name="Latreille P."/>
            <person name="Wendl M.C."/>
            <person name="Yang S.-P."/>
            <person name="Pohl C."/>
            <person name="Wallis J.W."/>
            <person name="Spieth J."/>
            <person name="Bieri T.A."/>
            <person name="Berkowicz N."/>
            <person name="Nelson J.O."/>
            <person name="Osborne J."/>
            <person name="Ding L."/>
            <person name="Meyer R."/>
            <person name="Sabo A."/>
            <person name="Shotland Y."/>
            <person name="Sinha P."/>
            <person name="Wohldmann P.E."/>
            <person name="Cook L.L."/>
            <person name="Hickenbotham M.T."/>
            <person name="Eldred J."/>
            <person name="Williams D."/>
            <person name="Jones T.A."/>
            <person name="She X."/>
            <person name="Ciccarelli F.D."/>
            <person name="Izaurralde E."/>
            <person name="Taylor J."/>
            <person name="Schmutz J."/>
            <person name="Myers R.M."/>
            <person name="Cox D.R."/>
            <person name="Huang X."/>
            <person name="McPherson J.D."/>
            <person name="Mardis E.R."/>
            <person name="Clifton S.W."/>
            <person name="Warren W.C."/>
            <person name="Chinwalla A.T."/>
            <person name="Eddy S.R."/>
            <person name="Marra M.A."/>
            <person name="Ovcharenko I."/>
            <person name="Furey T.S."/>
            <person name="Miller W."/>
            <person name="Eichler E.E."/>
            <person name="Bork P."/>
            <person name="Suyama M."/>
            <person name="Torrents D."/>
            <person name="Waterston R.H."/>
            <person name="Wilson R.K."/>
        </authorList>
    </citation>
    <scope>NUCLEOTIDE SEQUENCE [LARGE SCALE GENOMIC DNA]</scope>
    <scope>VARIANT GLN-149</scope>
</reference>
<reference key="4">
    <citation type="submission" date="2005-09" db="EMBL/GenBank/DDBJ databases">
        <authorList>
            <person name="Mural R.J."/>
            <person name="Istrail S."/>
            <person name="Sutton G.G."/>
            <person name="Florea L."/>
            <person name="Halpern A.L."/>
            <person name="Mobarry C.M."/>
            <person name="Lippert R."/>
            <person name="Walenz B."/>
            <person name="Shatkay H."/>
            <person name="Dew I."/>
            <person name="Miller J.R."/>
            <person name="Flanigan M.J."/>
            <person name="Edwards N.J."/>
            <person name="Bolanos R."/>
            <person name="Fasulo D."/>
            <person name="Halldorsson B.V."/>
            <person name="Hannenhalli S."/>
            <person name="Turner R."/>
            <person name="Yooseph S."/>
            <person name="Lu F."/>
            <person name="Nusskern D.R."/>
            <person name="Shue B.C."/>
            <person name="Zheng X.H."/>
            <person name="Zhong F."/>
            <person name="Delcher A.L."/>
            <person name="Huson D.H."/>
            <person name="Kravitz S.A."/>
            <person name="Mouchard L."/>
            <person name="Reinert K."/>
            <person name="Remington K.A."/>
            <person name="Clark A.G."/>
            <person name="Waterman M.S."/>
            <person name="Eichler E.E."/>
            <person name="Adams M.D."/>
            <person name="Hunkapiller M.W."/>
            <person name="Myers E.W."/>
            <person name="Venter J.C."/>
        </authorList>
    </citation>
    <scope>NUCLEOTIDE SEQUENCE [LARGE SCALE GENOMIC DNA]</scope>
</reference>
<reference key="5">
    <citation type="journal article" date="2004" name="Genome Res.">
        <title>The status, quality, and expansion of the NIH full-length cDNA project: the Mammalian Gene Collection (MGC).</title>
        <authorList>
            <consortium name="The MGC Project Team"/>
        </authorList>
    </citation>
    <scope>NUCLEOTIDE SEQUENCE [LARGE SCALE MRNA] (ISOFORM 1)</scope>
    <source>
        <tissue>Brain</tissue>
    </source>
</reference>
<reference key="6">
    <citation type="journal article" date="2007" name="BMC Genomics">
        <title>The full-ORF clone resource of the German cDNA consortium.</title>
        <authorList>
            <person name="Bechtel S."/>
            <person name="Rosenfelder H."/>
            <person name="Duda A."/>
            <person name="Schmidt C.P."/>
            <person name="Ernst U."/>
            <person name="Wellenreuther R."/>
            <person name="Mehrle A."/>
            <person name="Schuster C."/>
            <person name="Bahr A."/>
            <person name="Bloecker H."/>
            <person name="Heubner D."/>
            <person name="Hoerlein A."/>
            <person name="Michel G."/>
            <person name="Wedler H."/>
            <person name="Koehrer K."/>
            <person name="Ottenwaelder B."/>
            <person name="Poustka A."/>
            <person name="Wiemann S."/>
            <person name="Schupp I."/>
        </authorList>
    </citation>
    <scope>NUCLEOTIDE SEQUENCE [LARGE SCALE MRNA] OF 27-1016 (ISOFORM 1)</scope>
    <source>
        <tissue>Uterus</tissue>
    </source>
</reference>
<reference key="7">
    <citation type="journal article" date="2001" name="J. Biol. Chem.">
        <title>Isolation and characterization of EMILIN-2, a new component of the growing EMILINs family and a member of the EMI domain-containing superfamily.</title>
        <authorList>
            <person name="Doliana R."/>
            <person name="Bot S."/>
            <person name="Mungiguerra G."/>
            <person name="Canton A."/>
            <person name="Cilli S.P."/>
            <person name="Colombatti A."/>
        </authorList>
    </citation>
    <scope>TISSUE SPECIFICITY</scope>
</reference>
<reference key="8">
    <citation type="journal article" date="2006" name="Mol. Cell. Proteomics">
        <title>Elucidation of N-glycosylation sites on human platelet proteins: a glycoproteomic approach.</title>
        <authorList>
            <person name="Lewandrowski U."/>
            <person name="Moebius J."/>
            <person name="Walter U."/>
            <person name="Sickmann A."/>
        </authorList>
    </citation>
    <scope>GLYCOSYLATION [LARGE SCALE ANALYSIS] AT ASN-455</scope>
    <source>
        <tissue>Platelet</tissue>
    </source>
</reference>
<reference key="9">
    <citation type="journal article" date="2009" name="J. Proteome Res.">
        <title>Glycoproteomics analysis of human liver tissue by combination of multiple enzyme digestion and hydrazide chemistry.</title>
        <authorList>
            <person name="Chen R."/>
            <person name="Jiang X."/>
            <person name="Sun D."/>
            <person name="Han G."/>
            <person name="Wang F."/>
            <person name="Ye M."/>
            <person name="Wang L."/>
            <person name="Zou H."/>
        </authorList>
    </citation>
    <scope>GLYCOSYLATION [LARGE SCALE ANALYSIS] AT ASN-415; ASN-455; ASN-766 AND ASN-794</scope>
    <source>
        <tissue>Liver</tissue>
    </source>
</reference>
<reference key="10">
    <citation type="journal article" date="2014" name="J. Proteomics">
        <title>An enzyme assisted RP-RPLC approach for in-depth analysis of human liver phosphoproteome.</title>
        <authorList>
            <person name="Bian Y."/>
            <person name="Song C."/>
            <person name="Cheng K."/>
            <person name="Dong M."/>
            <person name="Wang F."/>
            <person name="Huang J."/>
            <person name="Sun D."/>
            <person name="Wang L."/>
            <person name="Ye M."/>
            <person name="Zou H."/>
        </authorList>
    </citation>
    <scope>IDENTIFICATION BY MASS SPECTROMETRY [LARGE SCALE ANALYSIS]</scope>
    <source>
        <tissue>Liver</tissue>
    </source>
</reference>
<reference key="11">
    <citation type="journal article" date="2009" name="J. Biomol. NMR">
        <title>NMR-based homology model for the solution structure of the C-terminal globular domain of EMILIN1.</title>
        <authorList>
            <person name="Verdone G."/>
            <person name="Corazza A."/>
            <person name="Colebrooke S.A."/>
            <person name="Cicero D."/>
            <person name="Eliseo T."/>
            <person name="Boyd J."/>
            <person name="Doliana R."/>
            <person name="Fogolari F."/>
            <person name="Viglino P."/>
            <person name="Colombatti A."/>
            <person name="Campbell I.D."/>
            <person name="Esposito G."/>
        </authorList>
    </citation>
    <scope>STRUCTURE BY NMR OF 867-1016</scope>
    <scope>SUBUNIT</scope>
</reference>
<reference key="12">
    <citation type="journal article" date="2016" name="Hum. Mutat.">
        <title>Diagnostic exome sequencing identifies a novel gene, EMILIN1, associated with autosomal-dominant hereditary connective tissue disease.</title>
        <authorList>
            <person name="Capuano A."/>
            <person name="Bucciotti F."/>
            <person name="Farwell K.D."/>
            <person name="Tippin Davis B."/>
            <person name="Mroske C."/>
            <person name="Hulick P.J."/>
            <person name="Weissman S.M."/>
            <person name="Gao Q."/>
            <person name="Spessotto P."/>
            <person name="Colombatti A."/>
            <person name="Doliana R."/>
        </authorList>
    </citation>
    <scope>VARIANT HMND10 THR-22</scope>
    <scope>CHARACTERIZATION OF VARIANT HMND10 THR-22</scope>
    <scope>SUBCELLULAR LOCATION</scope>
    <scope>SIGNAL SEQUENCE CLEAVAGE SITE</scope>
</reference>
<reference key="13">
    <citation type="journal article" date="2020" name="Neurobiol. Dis.">
        <title>Distal motor neuropathy associated with novel EMILIN1 mutation.</title>
        <authorList>
            <person name="Iacomino M."/>
            <person name="Doliana R."/>
            <person name="Marchese M."/>
            <person name="Capuano A."/>
            <person name="Striano P."/>
            <person name="Spessotto P."/>
            <person name="Bosisio G."/>
            <person name="Iodice R."/>
            <person name="Manganelli F."/>
            <person name="Lanteri P."/>
            <person name="Orsini A."/>
            <person name="Baldassari S."/>
            <person name="Baratto S."/>
            <person name="Fruscione F."/>
            <person name="Prada V."/>
            <person name="Broda P."/>
            <person name="Tessa A."/>
            <person name="Bertocci G."/>
            <person name="Schenone A."/>
            <person name="Colombatti A."/>
            <person name="Minetti C."/>
            <person name="Santorelli F.M."/>
            <person name="Zara F."/>
            <person name="Fiorillo C."/>
        </authorList>
    </citation>
    <scope>VARIANT HMND10 CYS-250</scope>
    <scope>INVOLVEMENT IN HMND10</scope>
    <scope>TISSUE SPECIFICITY</scope>
    <scope>SUBCELLULAR LOCATION</scope>
    <scope>CHARACTERIZATION OF VARIANT HMND10 CYS-250</scope>
</reference>
<reference key="14">
    <citation type="journal article" date="2022" name="Am. J. Hum. Genet.">
        <title>EMILIN1 deficiency causes arterial tortuosity with osteopenia and connects impaired elastogenesis with defective collagen fibrillogenesis.</title>
        <authorList>
            <person name="Adamo C.S."/>
            <person name="Beyens A."/>
            <person name="Schiavinato A."/>
            <person name="Keene D.R."/>
            <person name="Tufa S.F."/>
            <person name="Moergelin M."/>
            <person name="Brinckmann J."/>
            <person name="Sasaki T."/>
            <person name="Niehoff A."/>
            <person name="Dreiner M."/>
            <person name="Pottie L."/>
            <person name="Muino-Mosquera L."/>
            <person name="Gulec E.Y."/>
            <person name="Gezdirici A."/>
            <person name="Braghetta P."/>
            <person name="Bonaldo P."/>
            <person name="Wagener R."/>
            <person name="Paulsson M."/>
            <person name="Bornaun H."/>
            <person name="De Rycke R."/>
            <person name="De Bruyne M."/>
            <person name="Baeke F."/>
            <person name="Devine W.P."/>
            <person name="Gangaram B."/>
            <person name="Tam A."/>
            <person name="Balasubramanian M."/>
            <person name="Ellard S."/>
            <person name="Moore S."/>
            <person name="Symoens S."/>
            <person name="Shen J."/>
            <person name="Cole S."/>
            <person name="Schwarze U."/>
            <person name="Holmes K.W."/>
            <person name="Hayflick S.J."/>
            <person name="Wiszniewski W."/>
            <person name="Nampoothiri S."/>
            <person name="Davis E.C."/>
            <person name="Sakai L.Y."/>
            <person name="Sengle G."/>
            <person name="Callewaert B."/>
        </authorList>
    </citation>
    <scope>VARIANT ATBFS 536-GLN--ALA-1016 DEL</scope>
    <scope>CHARACTERIZATION OF VARIANT ATBFS 536-GLN--ALA-1016 DEL</scope>
    <scope>INVOLVEMENT IN ATBFS</scope>
    <scope>FUNCTION</scope>
</reference>
<accession>Q9Y6C2</accession>
<accession>A0A0C4DFX3</accession>
<accession>A5PL03</accession>
<accession>H0Y7A0</accession>
<accession>Q53SY9</accession>
<accession>Q96G58</accession>
<accession>Q96IH6</accession>
<accession>Q9UG76</accession>
<comment type="function">
    <text evidence="13">Involved in elastic and collagen fibers formation. It is required for EFEMP2 deposition into the extracellular matrix, and collagen network assembly and cross-linking via protein-lysine 6-oxidase/LOX activity (PubMed:36351433). May be responsible for anchoring smooth muscle cells to elastic fibers, and may be involved in the processes that regulate vessel assembly. Has cell adhesive capacity.</text>
</comment>
<comment type="subunit">
    <text evidence="1 9">Homotrimer associated through a moderately stable interaction of the C-terminal globular C1q domains, allowing the nucleation of the triple helix and then a further quaternary assembly to higher-order polymers via intermolecular disulfide bonds. Interacts with EMILIN2. Interacts with EFEMP2; this interaction promotes the incorporation of EFEMP2 into the extracellular matrix (By similarity).</text>
</comment>
<comment type="interaction">
    <interactant intactId="EBI-744586">
        <id>Q9Y6C2</id>
    </interactant>
    <interactant intactId="EBI-741753">
        <id>Q00994</id>
        <label>BEX3</label>
    </interactant>
    <organismsDiffer>false</organismsDiffer>
    <experiments>3</experiments>
</comment>
<comment type="interaction">
    <interactant intactId="EBI-744586">
        <id>Q9Y6C2</id>
    </interactant>
    <interactant intactId="EBI-10243741">
        <id>Q5H9J7</id>
        <label>BEX5</label>
    </interactant>
    <organismsDiffer>false</organismsDiffer>
    <experiments>4</experiments>
</comment>
<comment type="interaction">
    <interactant intactId="EBI-744586">
        <id>Q9Y6C2</id>
    </interactant>
    <interactant intactId="EBI-744586">
        <id>Q9Y6C2</id>
        <label>EMILIN1</label>
    </interactant>
    <organismsDiffer>false</organismsDiffer>
    <experiments>4</experiments>
</comment>
<comment type="interaction">
    <interactant intactId="EBI-744586">
        <id>Q9Y6C2</id>
    </interactant>
    <interactant intactId="EBI-744203">
        <id>Q8IY31</id>
        <label>IFT20</label>
    </interactant>
    <organismsDiffer>false</organismsDiffer>
    <experiments>6</experiments>
</comment>
<comment type="interaction">
    <interactant intactId="EBI-744586">
        <id>Q9Y6C2</id>
    </interactant>
    <interactant intactId="EBI-10250491">
        <id>Q6ISS4</id>
        <label>LAIR2</label>
    </interactant>
    <organismsDiffer>false</organismsDiffer>
    <experiments>3</experiments>
</comment>
<comment type="interaction">
    <interactant intactId="EBI-744586">
        <id>Q9Y6C2</id>
    </interactant>
    <interactant intactId="EBI-1050253">
        <id>Q96PC5</id>
        <label>MIA2</label>
    </interactant>
    <organismsDiffer>false</organismsDiffer>
    <experiments>3</experiments>
</comment>
<comment type="interaction">
    <interactant intactId="EBI-744586">
        <id>Q9Y6C2</id>
    </interactant>
    <interactant intactId="EBI-744593">
        <id>Q96QG7</id>
        <label>MTMR9</label>
    </interactant>
    <organismsDiffer>false</organismsDiffer>
    <experiments>10</experiments>
</comment>
<comment type="interaction">
    <interactant intactId="EBI-744586">
        <id>Q9Y6C2</id>
    </interactant>
    <interactant intactId="EBI-372942">
        <id>Q13287</id>
        <label>NMI</label>
    </interactant>
    <organismsDiffer>false</organismsDiffer>
    <experiments>4</experiments>
</comment>
<comment type="interaction">
    <interactant intactId="EBI-744586">
        <id>Q9Y6C2</id>
    </interactant>
    <interactant intactId="EBI-3923605">
        <id>Q5JTB6</id>
        <label>PLAC9</label>
    </interactant>
    <organismsDiffer>false</organismsDiffer>
    <experiments>5</experiments>
</comment>
<comment type="interaction">
    <interactant intactId="EBI-744586">
        <id>Q9Y6C2</id>
    </interactant>
    <interactant intactId="EBI-10265323">
        <id>Q8N443</id>
        <label>RIBC1</label>
    </interactant>
    <organismsDiffer>false</organismsDiffer>
    <experiments>3</experiments>
</comment>
<comment type="interaction">
    <interactant intactId="EBI-744586">
        <id>Q9Y6C2</id>
    </interactant>
    <interactant intactId="EBI-529518">
        <id>Q86VP1</id>
        <label>TAX1BP1</label>
    </interactant>
    <organismsDiffer>false</organismsDiffer>
    <experiments>5</experiments>
</comment>
<comment type="interaction">
    <interactant intactId="EBI-744586">
        <id>Q9Y6C2</id>
    </interactant>
    <interactant intactId="EBI-740767">
        <id>Q53FD0</id>
        <label>ZC2HC1C</label>
    </interactant>
    <organismsDiffer>false</organismsDiffer>
    <experiments>3</experiments>
</comment>
<comment type="interaction">
    <interactant intactId="EBI-11748557">
        <id>Q9Y6C2-2</id>
    </interactant>
    <interactant intactId="EBI-742038">
        <id>Q9P2A4</id>
        <label>ABI3</label>
    </interactant>
    <organismsDiffer>false</organismsDiffer>
    <experiments>3</experiments>
</comment>
<comment type="interaction">
    <interactant intactId="EBI-11748557">
        <id>Q9Y6C2-2</id>
    </interactant>
    <interactant intactId="EBI-1222467">
        <id>P02649</id>
        <label>APOE</label>
    </interactant>
    <organismsDiffer>false</organismsDiffer>
    <experiments>3</experiments>
</comment>
<comment type="interaction">
    <interactant intactId="EBI-11748557">
        <id>Q9Y6C2-2</id>
    </interactant>
    <interactant intactId="EBI-741753">
        <id>Q00994</id>
        <label>BEX3</label>
    </interactant>
    <organismsDiffer>false</organismsDiffer>
    <experiments>6</experiments>
</comment>
<comment type="interaction">
    <interactant intactId="EBI-11748557">
        <id>Q9Y6C2-2</id>
    </interactant>
    <interactant intactId="EBI-12123320">
        <id>Q12934-2</id>
        <label>BFSP1</label>
    </interactant>
    <organismsDiffer>false</organismsDiffer>
    <experiments>3</experiments>
</comment>
<comment type="interaction">
    <interactant intactId="EBI-11748557">
        <id>Q9Y6C2-2</id>
    </interactant>
    <interactant intactId="EBI-979174">
        <id>Q53HL2</id>
        <label>CDCA8</label>
    </interactant>
    <organismsDiffer>false</organismsDiffer>
    <experiments>3</experiments>
</comment>
<comment type="interaction">
    <interactant intactId="EBI-11748557">
        <id>Q9Y6C2-2</id>
    </interactant>
    <interactant intactId="EBI-2350265">
        <id>Q7L2Z9</id>
        <label>CENPQ</label>
    </interactant>
    <organismsDiffer>false</organismsDiffer>
    <experiments>3</experiments>
</comment>
<comment type="interaction">
    <interactant intactId="EBI-11748557">
        <id>Q9Y6C2-2</id>
    </interactant>
    <interactant intactId="EBI-16430119">
        <id>A0A0S2Z604</id>
        <label>COG7</label>
    </interactant>
    <organismsDiffer>false</organismsDiffer>
    <experiments>3</experiments>
</comment>
<comment type="interaction">
    <interactant intactId="EBI-11748557">
        <id>Q9Y6C2-2</id>
    </interactant>
    <interactant intactId="EBI-742054">
        <id>Q96D03</id>
        <label>DDIT4L</label>
    </interactant>
    <organismsDiffer>false</organismsDiffer>
    <experiments>3</experiments>
</comment>
<comment type="interaction">
    <interactant intactId="EBI-11748557">
        <id>Q9Y6C2-2</id>
    </interactant>
    <interactant intactId="EBI-750300">
        <id>Q01658</id>
        <label>DR1</label>
    </interactant>
    <organismsDiffer>false</organismsDiffer>
    <experiments>3</experiments>
</comment>
<comment type="interaction">
    <interactant intactId="EBI-11748557">
        <id>Q9Y6C2-2</id>
    </interactant>
    <interactant intactId="EBI-21603100">
        <id>P26378-2</id>
        <label>ELAVL4</label>
    </interactant>
    <organismsDiffer>false</organismsDiffer>
    <experiments>3</experiments>
</comment>
<comment type="interaction">
    <interactant intactId="EBI-11748557">
        <id>Q9Y6C2-2</id>
    </interactant>
    <interactant intactId="EBI-11748557">
        <id>Q9Y6C2-2</id>
        <label>EMILIN1</label>
    </interactant>
    <organismsDiffer>false</organismsDiffer>
    <experiments>3</experiments>
</comment>
<comment type="interaction">
    <interactant intactId="EBI-11748557">
        <id>Q9Y6C2-2</id>
    </interactant>
    <interactant intactId="EBI-740282">
        <id>Q9NVF7</id>
        <label>FBXO28</label>
    </interactant>
    <organismsDiffer>false</organismsDiffer>
    <experiments>3</experiments>
</comment>
<comment type="interaction">
    <interactant intactId="EBI-11748557">
        <id>Q9Y6C2-2</id>
    </interactant>
    <interactant intactId="EBI-11427343">
        <id>Q9P2W3</id>
        <label>GNG13</label>
    </interactant>
    <organismsDiffer>false</organismsDiffer>
    <experiments>3</experiments>
</comment>
<comment type="interaction">
    <interactant intactId="EBI-11748557">
        <id>Q9Y6C2-2</id>
    </interactant>
    <interactant intactId="EBI-466029">
        <id>P42858</id>
        <label>HTT</label>
    </interactant>
    <organismsDiffer>false</organismsDiffer>
    <experiments>3</experiments>
</comment>
<comment type="interaction">
    <interactant intactId="EBI-11748557">
        <id>Q9Y6C2-2</id>
    </interactant>
    <interactant intactId="EBI-9091197">
        <id>Q8IY31-3</id>
        <label>IFT20</label>
    </interactant>
    <organismsDiffer>false</organismsDiffer>
    <experiments>5</experiments>
</comment>
<comment type="interaction">
    <interactant intactId="EBI-11748557">
        <id>Q9Y6C2-2</id>
    </interactant>
    <interactant intactId="EBI-10250491">
        <id>Q6ISS4</id>
        <label>LAIR2</label>
    </interactant>
    <organismsDiffer>false</organismsDiffer>
    <experiments>3</experiments>
</comment>
<comment type="interaction">
    <interactant intactId="EBI-11748557">
        <id>Q9Y6C2-2</id>
    </interactant>
    <interactant intactId="EBI-744593">
        <id>Q96QG7</id>
        <label>MTMR9</label>
    </interactant>
    <organismsDiffer>false</organismsDiffer>
    <experiments>3</experiments>
</comment>
<comment type="interaction">
    <interactant intactId="EBI-11748557">
        <id>Q9Y6C2-2</id>
    </interactant>
    <interactant intactId="EBI-1014514">
        <id>P35240-4</id>
        <label>NF2</label>
    </interactant>
    <organismsDiffer>false</organismsDiffer>
    <experiments>3</experiments>
</comment>
<comment type="interaction">
    <interactant intactId="EBI-11748557">
        <id>Q9Y6C2-2</id>
    </interactant>
    <interactant intactId="EBI-3923605">
        <id>Q5JTB6</id>
        <label>PLAC9</label>
    </interactant>
    <organismsDiffer>false</organismsDiffer>
    <experiments>7</experiments>
</comment>
<comment type="interaction">
    <interactant intactId="EBI-11748557">
        <id>Q9Y6C2-2</id>
    </interactant>
    <interactant intactId="EBI-1383852">
        <id>P54646</id>
        <label>PRKAA2</label>
    </interactant>
    <organismsDiffer>false</organismsDiffer>
    <experiments>3</experiments>
</comment>
<comment type="interaction">
    <interactant intactId="EBI-11748557">
        <id>Q9Y6C2-2</id>
    </interactant>
    <interactant intactId="EBI-14093916">
        <id>Q9UJ41-4</id>
        <label>RABGEF1</label>
    </interactant>
    <organismsDiffer>false</organismsDiffer>
    <experiments>3</experiments>
</comment>
<comment type="interaction">
    <interactant intactId="EBI-11748557">
        <id>Q9Y6C2-2</id>
    </interactant>
    <interactant intactId="EBI-10265323">
        <id>Q8N443</id>
        <label>RIBC1</label>
    </interactant>
    <organismsDiffer>false</organismsDiffer>
    <experiments>6</experiments>
</comment>
<comment type="interaction">
    <interactant intactId="EBI-11748557">
        <id>Q9Y6C2-2</id>
    </interactant>
    <interactant intactId="EBI-12004298">
        <id>O75971-2</id>
        <label>SNAPC5</label>
    </interactant>
    <organismsDiffer>false</organismsDiffer>
    <experiments>3</experiments>
</comment>
<comment type="interaction">
    <interactant intactId="EBI-11748557">
        <id>Q9Y6C2-2</id>
    </interactant>
    <interactant intactId="EBI-358708">
        <id>Q9NYJ8</id>
        <label>TAB2</label>
    </interactant>
    <organismsDiffer>false</organismsDiffer>
    <experiments>3</experiments>
</comment>
<comment type="interaction">
    <interactant intactId="EBI-11748557">
        <id>Q9Y6C2-2</id>
    </interactant>
    <interactant intactId="EBI-529518">
        <id>Q86VP1</id>
        <label>TAX1BP1</label>
    </interactant>
    <organismsDiffer>false</organismsDiffer>
    <experiments>3</experiments>
</comment>
<comment type="interaction">
    <interactant intactId="EBI-11748557">
        <id>Q9Y6C2-2</id>
    </interactant>
    <interactant intactId="EBI-21353855">
        <id>Q99598</id>
        <label>TSNAX</label>
    </interactant>
    <organismsDiffer>false</organismsDiffer>
    <experiments>3</experiments>
</comment>
<comment type="interaction">
    <interactant intactId="EBI-11748557">
        <id>Q9Y6C2-2</id>
    </interactant>
    <interactant intactId="EBI-14104088">
        <id>Q53FD0-2</id>
        <label>ZC2HC1C</label>
    </interactant>
    <organismsDiffer>false</organismsDiffer>
    <experiments>3</experiments>
</comment>
<comment type="interaction">
    <interactant intactId="EBI-11748557">
        <id>Q9Y6C2-2</id>
    </interactant>
    <interactant intactId="EBI-625509">
        <id>Q8N720</id>
        <label>ZNF655</label>
    </interactant>
    <organismsDiffer>false</organismsDiffer>
    <experiments>3</experiments>
</comment>
<comment type="subcellular location">
    <subcellularLocation>
        <location evidence="11 12">Secreted</location>
        <location evidence="11 12">Extracellular space</location>
        <location evidence="11 12">Extracellular matrix</location>
    </subcellularLocation>
    <text evidence="14">Found mainly at the interface between amorphous elastin and microfibrils.</text>
</comment>
<comment type="alternative products">
    <event type="alternative splicing"/>
    <isoform>
        <id>Q9Y6C2-1</id>
        <name>1</name>
        <sequence type="displayed"/>
    </isoform>
    <isoform>
        <id>Q9Y6C2-2</id>
        <name>2</name>
        <sequence type="described" ref="VSP_055478 VSP_055479 VSP_055480"/>
    </isoform>
</comment>
<comment type="tissue specificity">
    <text evidence="6 12">Distributed in tissues where resilience and elastic recoil are prominent. Highest levels in the adult small intestine, aorta, lung, uterus, and appendix and in the fetal spleen, kidney, lung, and heart; intermediate expression was detected in adult liver, ovary, colon, stomach, lymph node and spleen; adult heart, bladder, prostate, adrenal gland, mammary gland, placenta and kidney showed low expression whereas a series of other adult tissues, including skeletal muscle and different regions of adult brain show no expression. Detected in intramuscular nerve bundles, where it particularly localizes in the epineurium, the most external layer of dense connective tissue enclosing the nerve (PubMed:31978608).</text>
</comment>
<comment type="disease" evidence="11 12">
    <disease id="DI-06528">
        <name>Neuronopathy, distal hereditary motor, autosomal dominant 10</name>
        <acronym>HMND10</acronym>
        <description>A form of distal hereditary motor neuronopathy, a heterogeneous group of neuromuscular diseases caused by selective degeneration of motor neurons in the anterior horn of the spinal cord, without sensory deficit in the posterior horn. HMND10 is characterized by length-dependent motor neuropathy primarily affecting the lower limbs, and onset of distal muscle weakness and atrophy in early childhood resulting in walking difficulties and gait abnormalities. Some affected individuals have pyramidal signs, including hyperreflexia. More variable features may include mild intellectual disability, minor gyration defects on brain imaging, foot deformities, and connective tissue defects.</description>
        <dbReference type="MIM" id="620080"/>
    </disease>
    <text>The disease is caused by variants affecting the gene represented in this entry.</text>
</comment>
<comment type="disease" evidence="13">
    <disease id="DI-06933">
        <name>Arterial tortuosity-bone fragility syndrome</name>
        <acronym>ATBFS</acronym>
        <description>An autosomal recessive disorder characterized by congenital arterial tortuosity, mainly affecting the aorta and main aortic side branches, aneurysm of the aortic root, and bone fragility resulting in fractures of the ribs, clavicle, acromion, metatarsal, or long bones. Tortuosity of the retinal arteries is present in some patients. Connective tissue features include blue sclerae, mild cutis laxa with a thin and velvety skin, joint hyperlaxity, and arachnodactyly.</description>
        <dbReference type="MIM" id="620908"/>
    </disease>
    <text>The disease is caused by variants affecting the gene represented in this entry.</text>
</comment>
<comment type="miscellaneous">
    <text>Its deposition precedes the appearance of elastin and is simultaneous with that of fibrillin 1.</text>
</comment>
<dbReference type="EMBL" id="AF088916">
    <property type="protein sequence ID" value="AAD42161.1"/>
    <property type="molecule type" value="mRNA"/>
</dbReference>
<dbReference type="EMBL" id="AF162780">
    <property type="protein sequence ID" value="AAF25006.1"/>
    <property type="molecule type" value="Genomic_DNA"/>
</dbReference>
<dbReference type="EMBL" id="AC013403">
    <property type="protein sequence ID" value="AAX93166.1"/>
    <property type="molecule type" value="Genomic_DNA"/>
</dbReference>
<dbReference type="EMBL" id="KF459615">
    <property type="status" value="NOT_ANNOTATED_CDS"/>
    <property type="molecule type" value="Genomic_DNA"/>
</dbReference>
<dbReference type="EMBL" id="CH471053">
    <property type="protein sequence ID" value="EAX00645.1"/>
    <property type="molecule type" value="Genomic_DNA"/>
</dbReference>
<dbReference type="EMBL" id="BC007530">
    <property type="protein sequence ID" value="AAH07530.1"/>
    <property type="molecule type" value="mRNA"/>
</dbReference>
<dbReference type="EMBL" id="BC009947">
    <property type="protein sequence ID" value="AAH09947.2"/>
    <property type="molecule type" value="mRNA"/>
</dbReference>
<dbReference type="EMBL" id="BC136279">
    <property type="protein sequence ID" value="AAI36280.1"/>
    <property type="molecule type" value="mRNA"/>
</dbReference>
<dbReference type="EMBL" id="BC142688">
    <property type="protein sequence ID" value="AAI42689.1"/>
    <property type="molecule type" value="mRNA"/>
</dbReference>
<dbReference type="EMBL" id="AL050138">
    <property type="protein sequence ID" value="CAB43287.2"/>
    <property type="molecule type" value="mRNA"/>
</dbReference>
<dbReference type="CCDS" id="CCDS1733.1">
    <molecule id="Q9Y6C2-1"/>
</dbReference>
<dbReference type="PIR" id="T08772">
    <property type="entry name" value="T08772"/>
</dbReference>
<dbReference type="RefSeq" id="NP_008977.1">
    <molecule id="Q9Y6C2-1"/>
    <property type="nucleotide sequence ID" value="NM_007046.4"/>
</dbReference>
<dbReference type="PDB" id="2KA3">
    <property type="method" value="NMR"/>
    <property type="chains" value="A/B/C=867-1016"/>
</dbReference>
<dbReference type="PDB" id="2OII">
    <property type="method" value="NMR"/>
    <property type="chains" value="A/B/C=867-1016"/>
</dbReference>
<dbReference type="PDBsum" id="2KA3"/>
<dbReference type="PDBsum" id="2OII"/>
<dbReference type="BMRB" id="Q9Y6C2"/>
<dbReference type="SMR" id="Q9Y6C2"/>
<dbReference type="BioGRID" id="116292">
    <property type="interactions" value="116"/>
</dbReference>
<dbReference type="ComplexPortal" id="CPX-421">
    <property type="entry name" value="EMILIN-1 complex"/>
</dbReference>
<dbReference type="CORUM" id="Q9Y6C2"/>
<dbReference type="DIP" id="DIP-35733N"/>
<dbReference type="FunCoup" id="Q9Y6C2">
    <property type="interactions" value="188"/>
</dbReference>
<dbReference type="IntAct" id="Q9Y6C2">
    <property type="interactions" value="110"/>
</dbReference>
<dbReference type="MINT" id="Q9Y6C2"/>
<dbReference type="STRING" id="9606.ENSP00000369677"/>
<dbReference type="GlyConnect" id="1201">
    <property type="glycosylation" value="6 N-Linked glycans (2 sites)"/>
</dbReference>
<dbReference type="GlyCosmos" id="Q9Y6C2">
    <property type="glycosylation" value="13 sites, 8 glycans"/>
</dbReference>
<dbReference type="GlyGen" id="Q9Y6C2">
    <property type="glycosylation" value="15 sites, 56 N-linked glycans (4 sites), 4 O-linked glycans (8 sites)"/>
</dbReference>
<dbReference type="iPTMnet" id="Q9Y6C2"/>
<dbReference type="PhosphoSitePlus" id="Q9Y6C2"/>
<dbReference type="BioMuta" id="EMILIN1"/>
<dbReference type="DMDM" id="205371751"/>
<dbReference type="REPRODUCTION-2DPAGE" id="Q9Y6C2"/>
<dbReference type="jPOST" id="Q9Y6C2"/>
<dbReference type="MassIVE" id="Q9Y6C2"/>
<dbReference type="PaxDb" id="9606-ENSP00000369677"/>
<dbReference type="PeptideAtlas" id="Q9Y6C2"/>
<dbReference type="ProteomicsDB" id="35392"/>
<dbReference type="ProteomicsDB" id="76828"/>
<dbReference type="ProteomicsDB" id="86648">
    <molecule id="Q9Y6C2-1"/>
</dbReference>
<dbReference type="Pumba" id="Q9Y6C2"/>
<dbReference type="Antibodypedia" id="1001">
    <property type="antibodies" value="206 antibodies from 24 providers"/>
</dbReference>
<dbReference type="DNASU" id="11117"/>
<dbReference type="Ensembl" id="ENST00000380320.9">
    <molecule id="Q9Y6C2-1"/>
    <property type="protein sequence ID" value="ENSP00000369677.4"/>
    <property type="gene ID" value="ENSG00000138080.14"/>
</dbReference>
<dbReference type="GeneID" id="11117"/>
<dbReference type="KEGG" id="hsa:11117"/>
<dbReference type="MANE-Select" id="ENST00000380320.9">
    <property type="protein sequence ID" value="ENSP00000369677.4"/>
    <property type="RefSeq nucleotide sequence ID" value="NM_007046.4"/>
    <property type="RefSeq protein sequence ID" value="NP_008977.1"/>
</dbReference>
<dbReference type="UCSC" id="uc002rii.5">
    <molecule id="Q9Y6C2-1"/>
    <property type="organism name" value="human"/>
</dbReference>
<dbReference type="AGR" id="HGNC:19880"/>
<dbReference type="CTD" id="11117"/>
<dbReference type="DisGeNET" id="11117"/>
<dbReference type="GeneCards" id="EMILIN1"/>
<dbReference type="HGNC" id="HGNC:19880">
    <property type="gene designation" value="EMILIN1"/>
</dbReference>
<dbReference type="HPA" id="ENSG00000138080">
    <property type="expression patterns" value="Low tissue specificity"/>
</dbReference>
<dbReference type="MalaCards" id="EMILIN1"/>
<dbReference type="MIM" id="130660">
    <property type="type" value="gene"/>
</dbReference>
<dbReference type="MIM" id="620080">
    <property type="type" value="phenotype"/>
</dbReference>
<dbReference type="MIM" id="620908">
    <property type="type" value="phenotype"/>
</dbReference>
<dbReference type="neXtProt" id="NX_Q9Y6C2"/>
<dbReference type="OpenTargets" id="ENSG00000138080"/>
<dbReference type="Orphanet" id="485418">
    <property type="disease" value="EMILIN-1-related connective tissue disease"/>
</dbReference>
<dbReference type="PharmGKB" id="PA134922135"/>
<dbReference type="VEuPathDB" id="HostDB:ENSG00000138080"/>
<dbReference type="eggNOG" id="ENOG502RIZH">
    <property type="taxonomic scope" value="Eukaryota"/>
</dbReference>
<dbReference type="GeneTree" id="ENSGT01030000234633"/>
<dbReference type="InParanoid" id="Q9Y6C2"/>
<dbReference type="OMA" id="CTQICTE"/>
<dbReference type="OrthoDB" id="9880922at2759"/>
<dbReference type="PAN-GO" id="Q9Y6C2">
    <property type="GO annotations" value="1 GO annotation based on evolutionary models"/>
</dbReference>
<dbReference type="PhylomeDB" id="Q9Y6C2"/>
<dbReference type="TreeFam" id="TF331033"/>
<dbReference type="PathwayCommons" id="Q9Y6C2"/>
<dbReference type="Reactome" id="R-HSA-2129379">
    <property type="pathway name" value="Molecules associated with elastic fibres"/>
</dbReference>
<dbReference type="SignaLink" id="Q9Y6C2"/>
<dbReference type="BioGRID-ORCS" id="11117">
    <property type="hits" value="11 hits in 1150 CRISPR screens"/>
</dbReference>
<dbReference type="ChiTaRS" id="EMILIN1">
    <property type="organism name" value="human"/>
</dbReference>
<dbReference type="EvolutionaryTrace" id="Q9Y6C2"/>
<dbReference type="GeneWiki" id="EMILIN1"/>
<dbReference type="GenomeRNAi" id="11117"/>
<dbReference type="Pharos" id="Q9Y6C2">
    <property type="development level" value="Tbio"/>
</dbReference>
<dbReference type="PRO" id="PR:Q9Y6C2"/>
<dbReference type="Proteomes" id="UP000005640">
    <property type="component" value="Chromosome 2"/>
</dbReference>
<dbReference type="RNAct" id="Q9Y6C2">
    <property type="molecule type" value="protein"/>
</dbReference>
<dbReference type="Bgee" id="ENSG00000138080">
    <property type="expression patterns" value="Expressed in right coronary artery and 132 other cell types or tissues"/>
</dbReference>
<dbReference type="ExpressionAtlas" id="Q9Y6C2">
    <property type="expression patterns" value="baseline and differential"/>
</dbReference>
<dbReference type="GO" id="GO:0005581">
    <property type="term" value="C:collagen trimer"/>
    <property type="evidence" value="ECO:0007669"/>
    <property type="project" value="UniProtKB-KW"/>
</dbReference>
<dbReference type="GO" id="GO:0062023">
    <property type="term" value="C:collagen-containing extracellular matrix"/>
    <property type="evidence" value="ECO:0000315"/>
    <property type="project" value="UniProtKB"/>
</dbReference>
<dbReference type="GO" id="GO:1990971">
    <property type="term" value="C:EMILIN complex"/>
    <property type="evidence" value="ECO:0000315"/>
    <property type="project" value="CAFA"/>
</dbReference>
<dbReference type="GO" id="GO:0070062">
    <property type="term" value="C:extracellular exosome"/>
    <property type="evidence" value="ECO:0007005"/>
    <property type="project" value="UniProtKB"/>
</dbReference>
<dbReference type="GO" id="GO:0005576">
    <property type="term" value="C:extracellular region"/>
    <property type="evidence" value="ECO:0000304"/>
    <property type="project" value="Reactome"/>
</dbReference>
<dbReference type="GO" id="GO:0005615">
    <property type="term" value="C:extracellular space"/>
    <property type="evidence" value="ECO:0000315"/>
    <property type="project" value="UniProtKB"/>
</dbReference>
<dbReference type="GO" id="GO:0034668">
    <property type="term" value="C:integrin alpha4-beta1 complex"/>
    <property type="evidence" value="ECO:0000315"/>
    <property type="project" value="CAFA"/>
</dbReference>
<dbReference type="GO" id="GO:0030023">
    <property type="term" value="F:extracellular matrix constituent conferring elasticity"/>
    <property type="evidence" value="ECO:0000318"/>
    <property type="project" value="GO_Central"/>
</dbReference>
<dbReference type="GO" id="GO:0042802">
    <property type="term" value="F:identical protein binding"/>
    <property type="evidence" value="ECO:0000353"/>
    <property type="project" value="IntAct"/>
</dbReference>
<dbReference type="GO" id="GO:0098640">
    <property type="term" value="F:integrin binding involved in cell-matrix adhesion"/>
    <property type="evidence" value="ECO:0000315"/>
    <property type="project" value="CAFA"/>
</dbReference>
<dbReference type="GO" id="GO:0060090">
    <property type="term" value="F:molecular adaptor activity"/>
    <property type="evidence" value="ECO:0000315"/>
    <property type="project" value="DisProt"/>
</dbReference>
<dbReference type="GO" id="GO:0003180">
    <property type="term" value="P:aortic valve morphogenesis"/>
    <property type="evidence" value="ECO:0000250"/>
    <property type="project" value="BHF-UCL"/>
</dbReference>
<dbReference type="GO" id="GO:0007155">
    <property type="term" value="P:cell adhesion"/>
    <property type="evidence" value="ECO:0000304"/>
    <property type="project" value="ProtInc"/>
</dbReference>
<dbReference type="GO" id="GO:0033627">
    <property type="term" value="P:cell adhesion mediated by integrin"/>
    <property type="evidence" value="ECO:0000266"/>
    <property type="project" value="ComplexPortal"/>
</dbReference>
<dbReference type="GO" id="GO:0016477">
    <property type="term" value="P:cell migration"/>
    <property type="evidence" value="ECO:0000315"/>
    <property type="project" value="CAFA"/>
</dbReference>
<dbReference type="GO" id="GO:0007160">
    <property type="term" value="P:cell-matrix adhesion"/>
    <property type="evidence" value="ECO:0000315"/>
    <property type="project" value="CAFA"/>
</dbReference>
<dbReference type="GO" id="GO:0048251">
    <property type="term" value="P:elastic fiber assembly"/>
    <property type="evidence" value="ECO:0000250"/>
    <property type="project" value="BHF-UCL"/>
</dbReference>
<dbReference type="GO" id="GO:0016525">
    <property type="term" value="P:negative regulation of angiogenesis"/>
    <property type="evidence" value="ECO:0000250"/>
    <property type="project" value="BHF-UCL"/>
</dbReference>
<dbReference type="GO" id="GO:0050866">
    <property type="term" value="P:negative regulation of cell activation"/>
    <property type="evidence" value="ECO:0000250"/>
    <property type="project" value="BHF-UCL"/>
</dbReference>
<dbReference type="GO" id="GO:0030336">
    <property type="term" value="P:negative regulation of cell migration"/>
    <property type="evidence" value="ECO:0000250"/>
    <property type="project" value="ComplexPortal"/>
</dbReference>
<dbReference type="GO" id="GO:0032966">
    <property type="term" value="P:negative regulation of collagen biosynthetic process"/>
    <property type="evidence" value="ECO:0000250"/>
    <property type="project" value="BHF-UCL"/>
</dbReference>
<dbReference type="GO" id="GO:1904027">
    <property type="term" value="P:negative regulation of collagen fibril organization"/>
    <property type="evidence" value="ECO:0000250"/>
    <property type="project" value="BHF-UCL"/>
</dbReference>
<dbReference type="GO" id="GO:0070373">
    <property type="term" value="P:negative regulation of ERK1 and ERK2 cascade"/>
    <property type="evidence" value="ECO:0000250"/>
    <property type="project" value="BHF-UCL"/>
</dbReference>
<dbReference type="GO" id="GO:0010629">
    <property type="term" value="P:negative regulation of gene expression"/>
    <property type="evidence" value="ECO:0000250"/>
    <property type="project" value="BHF-UCL"/>
</dbReference>
<dbReference type="GO" id="GO:1905522">
    <property type="term" value="P:negative regulation of macrophage migration"/>
    <property type="evidence" value="ECO:0000250"/>
    <property type="project" value="BHF-UCL"/>
</dbReference>
<dbReference type="GO" id="GO:0060392">
    <property type="term" value="P:negative regulation of SMAD protein signal transduction"/>
    <property type="evidence" value="ECO:0000250"/>
    <property type="project" value="BHF-UCL"/>
</dbReference>
<dbReference type="GO" id="GO:0030512">
    <property type="term" value="P:negative regulation of transforming growth factor beta receptor signaling pathway"/>
    <property type="evidence" value="ECO:0000250"/>
    <property type="project" value="BHF-UCL"/>
</dbReference>
<dbReference type="GO" id="GO:0030948">
    <property type="term" value="P:negative regulation of vascular endothelial growth factor receptor signaling pathway"/>
    <property type="evidence" value="ECO:0000250"/>
    <property type="project" value="BHF-UCL"/>
</dbReference>
<dbReference type="GO" id="GO:1900747">
    <property type="term" value="P:negative regulation of vascular endothelial growth factor signaling pathway"/>
    <property type="evidence" value="ECO:0000250"/>
    <property type="project" value="BHF-UCL"/>
</dbReference>
<dbReference type="GO" id="GO:0045766">
    <property type="term" value="P:positive regulation of angiogenesis"/>
    <property type="evidence" value="ECO:0000266"/>
    <property type="project" value="ComplexPortal"/>
</dbReference>
<dbReference type="GO" id="GO:0043065">
    <property type="term" value="P:positive regulation of apoptotic process"/>
    <property type="evidence" value="ECO:0000250"/>
    <property type="project" value="ComplexPortal"/>
</dbReference>
<dbReference type="GO" id="GO:0030194">
    <property type="term" value="P:positive regulation of blood coagulation"/>
    <property type="evidence" value="ECO:0000250"/>
    <property type="project" value="ComplexPortal"/>
</dbReference>
<dbReference type="GO" id="GO:0010811">
    <property type="term" value="P:positive regulation of cell-substrate adhesion"/>
    <property type="evidence" value="ECO:0007669"/>
    <property type="project" value="Ensembl"/>
</dbReference>
<dbReference type="GO" id="GO:1900426">
    <property type="term" value="P:positive regulation of defense response to bacterium"/>
    <property type="evidence" value="ECO:0000314"/>
    <property type="project" value="ComplexPortal"/>
</dbReference>
<dbReference type="GO" id="GO:1901203">
    <property type="term" value="P:positive regulation of extracellular matrix assembly"/>
    <property type="evidence" value="ECO:0000250"/>
    <property type="project" value="BHF-UCL"/>
</dbReference>
<dbReference type="GO" id="GO:0010628">
    <property type="term" value="P:positive regulation of gene expression"/>
    <property type="evidence" value="ECO:0000250"/>
    <property type="project" value="BHF-UCL"/>
</dbReference>
<dbReference type="GO" id="GO:1901731">
    <property type="term" value="P:positive regulation of platelet aggregation"/>
    <property type="evidence" value="ECO:0000250"/>
    <property type="project" value="ComplexPortal"/>
</dbReference>
<dbReference type="GO" id="GO:0008217">
    <property type="term" value="P:regulation of blood pressure"/>
    <property type="evidence" value="ECO:0000266"/>
    <property type="project" value="ComplexPortal"/>
</dbReference>
<dbReference type="GO" id="GO:0042127">
    <property type="term" value="P:regulation of cell population proliferation"/>
    <property type="evidence" value="ECO:0000266"/>
    <property type="project" value="ComplexPortal"/>
</dbReference>
<dbReference type="FunFam" id="2.60.120.40:FF:000010">
    <property type="entry name" value="EMILIN-1 protein"/>
    <property type="match status" value="1"/>
</dbReference>
<dbReference type="Gene3D" id="2.60.120.40">
    <property type="match status" value="1"/>
</dbReference>
<dbReference type="InterPro" id="IPR001073">
    <property type="entry name" value="C1q_dom"/>
</dbReference>
<dbReference type="InterPro" id="IPR008160">
    <property type="entry name" value="Collagen"/>
</dbReference>
<dbReference type="InterPro" id="IPR050392">
    <property type="entry name" value="Collagen/C1q_domain"/>
</dbReference>
<dbReference type="InterPro" id="IPR011489">
    <property type="entry name" value="EMI_domain"/>
</dbReference>
<dbReference type="InterPro" id="IPR008983">
    <property type="entry name" value="Tumour_necrosis_fac-like_dom"/>
</dbReference>
<dbReference type="PANTHER" id="PTHR15427">
    <property type="entry name" value="EMILIN ELASTIN MICROFIBRIL INTERFACE-LOCATED PROTEIN ELASTIN MICROFIBRIL INTERFACER"/>
    <property type="match status" value="1"/>
</dbReference>
<dbReference type="PANTHER" id="PTHR15427:SF1">
    <property type="entry name" value="EMILIN-1"/>
    <property type="match status" value="1"/>
</dbReference>
<dbReference type="Pfam" id="PF00386">
    <property type="entry name" value="C1q"/>
    <property type="match status" value="1"/>
</dbReference>
<dbReference type="Pfam" id="PF01391">
    <property type="entry name" value="Collagen"/>
    <property type="match status" value="1"/>
</dbReference>
<dbReference type="Pfam" id="PF07546">
    <property type="entry name" value="EMI"/>
    <property type="match status" value="1"/>
</dbReference>
<dbReference type="SMART" id="SM00110">
    <property type="entry name" value="C1Q"/>
    <property type="match status" value="1"/>
</dbReference>
<dbReference type="SUPFAM" id="SSF49842">
    <property type="entry name" value="TNF-like"/>
    <property type="match status" value="1"/>
</dbReference>
<dbReference type="PROSITE" id="PS50871">
    <property type="entry name" value="C1Q"/>
    <property type="match status" value="1"/>
</dbReference>
<dbReference type="PROSITE" id="PS51041">
    <property type="entry name" value="EMI"/>
    <property type="match status" value="1"/>
</dbReference>
<feature type="signal peptide" evidence="11">
    <location>
        <begin position="1"/>
        <end position="21"/>
    </location>
</feature>
<feature type="chain" id="PRO_0000007815" description="EMILIN-1">
    <location>
        <begin position="22"/>
        <end position="1016"/>
    </location>
</feature>
<feature type="domain" description="EMI" evidence="4">
    <location>
        <begin position="56"/>
        <end position="131"/>
    </location>
</feature>
<feature type="domain" description="Collagen-like">
    <location>
        <begin position="814"/>
        <end position="864"/>
    </location>
</feature>
<feature type="domain" description="C1q" evidence="3">
    <location>
        <begin position="866"/>
        <end position="1013"/>
    </location>
</feature>
<feature type="region of interest" description="Disordered" evidence="5">
    <location>
        <begin position="135"/>
        <end position="182"/>
    </location>
</feature>
<feature type="region of interest" description="Disordered" evidence="5">
    <location>
        <begin position="257"/>
        <end position="288"/>
    </location>
</feature>
<feature type="region of interest" description="Disordered" evidence="5">
    <location>
        <begin position="383"/>
        <end position="402"/>
    </location>
</feature>
<feature type="region of interest" description="Disordered" evidence="5">
    <location>
        <begin position="416"/>
        <end position="435"/>
    </location>
</feature>
<feature type="region of interest" description="Disordered" evidence="5">
    <location>
        <begin position="811"/>
        <end position="863"/>
    </location>
</feature>
<feature type="region of interest" description="Disordered" evidence="5">
    <location>
        <begin position="942"/>
        <end position="961"/>
    </location>
</feature>
<feature type="coiled-coil region" evidence="2">
    <location>
        <begin position="216"/>
        <end position="256"/>
    </location>
</feature>
<feature type="coiled-coil region" evidence="2">
    <location>
        <begin position="356"/>
        <end position="420"/>
    </location>
</feature>
<feature type="coiled-coil region" evidence="2">
    <location>
        <begin position="576"/>
        <end position="603"/>
    </location>
</feature>
<feature type="coiled-coil region" evidence="2">
    <location>
        <begin position="685"/>
        <end position="752"/>
    </location>
</feature>
<feature type="coiled-coil region" evidence="2">
    <location>
        <begin position="835"/>
        <end position="857"/>
    </location>
</feature>
<feature type="compositionally biased region" description="Low complexity" evidence="5">
    <location>
        <begin position="139"/>
        <end position="165"/>
    </location>
</feature>
<feature type="compositionally biased region" description="Low complexity" evidence="5">
    <location>
        <begin position="266"/>
        <end position="279"/>
    </location>
</feature>
<feature type="compositionally biased region" description="Gly residues" evidence="5">
    <location>
        <begin position="386"/>
        <end position="397"/>
    </location>
</feature>
<feature type="compositionally biased region" description="Pro residues" evidence="5">
    <location>
        <begin position="821"/>
        <end position="839"/>
    </location>
</feature>
<feature type="glycosylation site" description="N-linked (GlcNAc...) asparagine" evidence="2">
    <location>
        <position position="154"/>
    </location>
</feature>
<feature type="glycosylation site" description="N-linked (GlcNAc...) asparagine" evidence="10">
    <location>
        <position position="415"/>
    </location>
</feature>
<feature type="glycosylation site" description="N-linked (GlcNAc...) asparagine" evidence="8 10">
    <location>
        <position position="455"/>
    </location>
</feature>
<feature type="glycosylation site" description="N-linked (GlcNAc...) asparagine" evidence="2">
    <location>
        <position position="561"/>
    </location>
</feature>
<feature type="glycosylation site" description="N-linked (GlcNAc...) asparagine" evidence="2">
    <location>
        <position position="658"/>
    </location>
</feature>
<feature type="glycosylation site" description="N-linked (GlcNAc...) asparagine" evidence="10">
    <location>
        <position position="766"/>
    </location>
</feature>
<feature type="glycosylation site" description="N-linked (GlcNAc...) asparagine" evidence="10">
    <location>
        <position position="794"/>
    </location>
</feature>
<feature type="disulfide bond" evidence="4">
    <location>
        <begin position="60"/>
        <end position="121"/>
    </location>
</feature>
<feature type="disulfide bond" evidence="4">
    <location>
        <begin position="85"/>
        <end position="92"/>
    </location>
</feature>
<feature type="disulfide bond" evidence="4">
    <location>
        <begin position="120"/>
        <end position="129"/>
    </location>
</feature>
<feature type="splice variant" id="VSP_055478" description="In isoform 2." evidence="15">
    <location>
        <begin position="1"/>
        <end position="674"/>
    </location>
</feature>
<feature type="splice variant" id="VSP_055479" description="In isoform 2." evidence="15">
    <original>L</original>
    <variation>M</variation>
    <location>
        <position position="675"/>
    </location>
</feature>
<feature type="splice variant" id="VSP_055480" description="In isoform 2." evidence="15">
    <original>T</original>
    <variation>TGEGTK</variation>
    <location>
        <position position="813"/>
    </location>
</feature>
<feature type="sequence variant" id="VAR_077591" description="In HMND10; uncertain significance; decreased secretion; accumulates in the endoplasmic reticulum; dbSNP:rs753862645." evidence="11">
    <original>A</original>
    <variation>T</variation>
    <location>
        <position position="22"/>
    </location>
</feature>
<feature type="sequence variant" id="VAR_046095" description="In dbSNP:rs2736976." evidence="7">
    <original>R</original>
    <variation>Q</variation>
    <location>
        <position position="149"/>
    </location>
</feature>
<feature type="sequence variant" id="VAR_087801" description="In HMND10; unable to rescue locomotor defects in Emilin1a zebrafish morphants; reduced extracellular deposition of EMILIN-1 from patient cells." evidence="12">
    <original>R</original>
    <variation>C</variation>
    <location>
        <position position="250"/>
    </location>
</feature>
<feature type="sequence variant" id="VAR_089980" description="In ATBFS; likely pathogenic; strong reduction of mRNA levels in homozygous patient cells; loss of localization to extracellular matrix though a minor amount of mutant protein remains detectable in patient cell lysate." evidence="13">
    <location>
        <begin position="536"/>
        <end position="1016"/>
    </location>
</feature>
<feature type="sequence variant" id="VAR_046096" description="In dbSNP:rs36069611.">
    <original>Q</original>
    <variation>R</variation>
    <location>
        <position position="536"/>
    </location>
</feature>
<feature type="sequence variant" id="VAR_046097" description="In dbSNP:rs36045790.">
    <original>E</original>
    <variation>K</variation>
    <location>
        <position position="903"/>
    </location>
</feature>
<feature type="strand" evidence="16">
    <location>
        <begin position="872"/>
        <end position="876"/>
    </location>
</feature>
<feature type="strand" evidence="16">
    <location>
        <begin position="884"/>
        <end position="886"/>
    </location>
</feature>
<feature type="strand" evidence="16">
    <location>
        <begin position="891"/>
        <end position="897"/>
    </location>
</feature>
<feature type="turn" evidence="16">
    <location>
        <begin position="902"/>
        <end position="905"/>
    </location>
</feature>
<feature type="strand" evidence="16">
    <location>
        <begin position="906"/>
        <end position="908"/>
    </location>
</feature>
<feature type="strand" evidence="16">
    <location>
        <begin position="913"/>
        <end position="919"/>
    </location>
</feature>
<feature type="strand" evidence="16">
    <location>
        <begin position="929"/>
        <end position="933"/>
    </location>
</feature>
<feature type="turn" evidence="16">
    <location>
        <begin position="935"/>
        <end position="937"/>
    </location>
</feature>
<feature type="strand" evidence="16">
    <location>
        <begin position="942"/>
        <end position="946"/>
    </location>
</feature>
<feature type="strand" evidence="17">
    <location>
        <begin position="972"/>
        <end position="974"/>
    </location>
</feature>
<feature type="strand" evidence="16">
    <location>
        <begin position="982"/>
        <end position="986"/>
    </location>
</feature>
<feature type="strand" evidence="16">
    <location>
        <begin position="1002"/>
        <end position="1009"/>
    </location>
</feature>
<protein>
    <recommendedName>
        <fullName>EMILIN-1</fullName>
    </recommendedName>
    <alternativeName>
        <fullName>Elastin microfibril interface-located protein 1</fullName>
        <shortName>Elastin microfibril interfacer 1</shortName>
    </alternativeName>
</protein>
<organism>
    <name type="scientific">Homo sapiens</name>
    <name type="common">Human</name>
    <dbReference type="NCBI Taxonomy" id="9606"/>
    <lineage>
        <taxon>Eukaryota</taxon>
        <taxon>Metazoa</taxon>
        <taxon>Chordata</taxon>
        <taxon>Craniata</taxon>
        <taxon>Vertebrata</taxon>
        <taxon>Euteleostomi</taxon>
        <taxon>Mammalia</taxon>
        <taxon>Eutheria</taxon>
        <taxon>Euarchontoglires</taxon>
        <taxon>Primates</taxon>
        <taxon>Haplorrhini</taxon>
        <taxon>Catarrhini</taxon>
        <taxon>Hominidae</taxon>
        <taxon>Homo</taxon>
    </lineage>
</organism>